<evidence type="ECO:0000255" key="1">
    <source>
        <dbReference type="HAMAP-Rule" id="MF_00082"/>
    </source>
</evidence>
<gene>
    <name evidence="1" type="primary">argB</name>
    <name type="ordered locus">sync_2029</name>
</gene>
<dbReference type="EC" id="2.7.2.8" evidence="1"/>
<dbReference type="EMBL" id="CP000435">
    <property type="protein sequence ID" value="ABI47595.1"/>
    <property type="molecule type" value="Genomic_DNA"/>
</dbReference>
<dbReference type="RefSeq" id="WP_011619944.1">
    <property type="nucleotide sequence ID" value="NC_008319.1"/>
</dbReference>
<dbReference type="SMR" id="Q0I8J0"/>
<dbReference type="STRING" id="64471.sync_2029"/>
<dbReference type="KEGG" id="syg:sync_2029"/>
<dbReference type="eggNOG" id="COG0548">
    <property type="taxonomic scope" value="Bacteria"/>
</dbReference>
<dbReference type="HOGENOM" id="CLU_053680_0_0_3"/>
<dbReference type="OrthoDB" id="9803155at2"/>
<dbReference type="UniPathway" id="UPA00068">
    <property type="reaction ID" value="UER00107"/>
</dbReference>
<dbReference type="Proteomes" id="UP000001961">
    <property type="component" value="Chromosome"/>
</dbReference>
<dbReference type="GO" id="GO:0005737">
    <property type="term" value="C:cytoplasm"/>
    <property type="evidence" value="ECO:0007669"/>
    <property type="project" value="UniProtKB-SubCell"/>
</dbReference>
<dbReference type="GO" id="GO:0003991">
    <property type="term" value="F:acetylglutamate kinase activity"/>
    <property type="evidence" value="ECO:0007669"/>
    <property type="project" value="UniProtKB-UniRule"/>
</dbReference>
<dbReference type="GO" id="GO:0005524">
    <property type="term" value="F:ATP binding"/>
    <property type="evidence" value="ECO:0007669"/>
    <property type="project" value="UniProtKB-UniRule"/>
</dbReference>
<dbReference type="GO" id="GO:0042450">
    <property type="term" value="P:arginine biosynthetic process via ornithine"/>
    <property type="evidence" value="ECO:0007669"/>
    <property type="project" value="UniProtKB-UniRule"/>
</dbReference>
<dbReference type="GO" id="GO:0006526">
    <property type="term" value="P:L-arginine biosynthetic process"/>
    <property type="evidence" value="ECO:0007669"/>
    <property type="project" value="UniProtKB-UniPathway"/>
</dbReference>
<dbReference type="CDD" id="cd04250">
    <property type="entry name" value="AAK_NAGK-C"/>
    <property type="match status" value="1"/>
</dbReference>
<dbReference type="FunFam" id="3.40.1160.10:FF:000004">
    <property type="entry name" value="Acetylglutamate kinase"/>
    <property type="match status" value="1"/>
</dbReference>
<dbReference type="Gene3D" id="3.40.1160.10">
    <property type="entry name" value="Acetylglutamate kinase-like"/>
    <property type="match status" value="1"/>
</dbReference>
<dbReference type="HAMAP" id="MF_00082">
    <property type="entry name" value="ArgB"/>
    <property type="match status" value="1"/>
</dbReference>
<dbReference type="InterPro" id="IPR036393">
    <property type="entry name" value="AceGlu_kinase-like_sf"/>
</dbReference>
<dbReference type="InterPro" id="IPR004662">
    <property type="entry name" value="AcgluKinase_fam"/>
</dbReference>
<dbReference type="InterPro" id="IPR037528">
    <property type="entry name" value="ArgB"/>
</dbReference>
<dbReference type="InterPro" id="IPR001048">
    <property type="entry name" value="Asp/Glu/Uridylate_kinase"/>
</dbReference>
<dbReference type="InterPro" id="IPR001057">
    <property type="entry name" value="Glu/AcGlu_kinase"/>
</dbReference>
<dbReference type="InterPro" id="IPR041727">
    <property type="entry name" value="NAGK-C"/>
</dbReference>
<dbReference type="NCBIfam" id="TIGR00761">
    <property type="entry name" value="argB"/>
    <property type="match status" value="1"/>
</dbReference>
<dbReference type="PANTHER" id="PTHR23342">
    <property type="entry name" value="N-ACETYLGLUTAMATE SYNTHASE"/>
    <property type="match status" value="1"/>
</dbReference>
<dbReference type="PANTHER" id="PTHR23342:SF0">
    <property type="entry name" value="N-ACETYLGLUTAMATE SYNTHASE, MITOCHONDRIAL"/>
    <property type="match status" value="1"/>
</dbReference>
<dbReference type="Pfam" id="PF00696">
    <property type="entry name" value="AA_kinase"/>
    <property type="match status" value="1"/>
</dbReference>
<dbReference type="PIRSF" id="PIRSF000728">
    <property type="entry name" value="NAGK"/>
    <property type="match status" value="1"/>
</dbReference>
<dbReference type="PRINTS" id="PR00474">
    <property type="entry name" value="GLU5KINASE"/>
</dbReference>
<dbReference type="SUPFAM" id="SSF53633">
    <property type="entry name" value="Carbamate kinase-like"/>
    <property type="match status" value="1"/>
</dbReference>
<feature type="chain" id="PRO_0000264770" description="Acetylglutamate kinase">
    <location>
        <begin position="1"/>
        <end position="285"/>
    </location>
</feature>
<feature type="binding site" evidence="1">
    <location>
        <begin position="63"/>
        <end position="64"/>
    </location>
    <ligand>
        <name>substrate</name>
    </ligand>
</feature>
<feature type="binding site" evidence="1">
    <location>
        <position position="85"/>
    </location>
    <ligand>
        <name>substrate</name>
    </ligand>
</feature>
<feature type="binding site" evidence="1">
    <location>
        <position position="178"/>
    </location>
    <ligand>
        <name>substrate</name>
    </ligand>
</feature>
<feature type="site" description="Transition state stabilizer" evidence="1">
    <location>
        <position position="28"/>
    </location>
</feature>
<feature type="site" description="Transition state stabilizer" evidence="1">
    <location>
        <position position="241"/>
    </location>
</feature>
<name>ARGB_SYNS3</name>
<sequence length="285" mass="30248">MDDSLRVSVLSEALPYIQRFAGRRIVVKYGGAAMVHAELRDAVFRDIALLASVGVQPVVVHGGGPEINTWLKRLDIRSEFRDGLRVTDAETMDVVEMVLVGRVNKQIVNGLNRLGASAVGLSGSDGRLVEARPWGDGNHGLVGDVARVNPDVLEPLLARGYVPVISSVAANPEGESHNINADTVAGELAAALEAEKLILLTDTQGILRDRDNPNSLIRQLRLSEARQLIHDGVVAGGMTPKTECCIRALAQGVAAAHIVDGRVPHALLLEVFTDAGIGTMVLGCG</sequence>
<accession>Q0I8J0</accession>
<comment type="function">
    <text evidence="1">Catalyzes the ATP-dependent phosphorylation of N-acetyl-L-glutamate.</text>
</comment>
<comment type="catalytic activity">
    <reaction evidence="1">
        <text>N-acetyl-L-glutamate + ATP = N-acetyl-L-glutamyl 5-phosphate + ADP</text>
        <dbReference type="Rhea" id="RHEA:14629"/>
        <dbReference type="ChEBI" id="CHEBI:30616"/>
        <dbReference type="ChEBI" id="CHEBI:44337"/>
        <dbReference type="ChEBI" id="CHEBI:57936"/>
        <dbReference type="ChEBI" id="CHEBI:456216"/>
        <dbReference type="EC" id="2.7.2.8"/>
    </reaction>
</comment>
<comment type="pathway">
    <text evidence="1">Amino-acid biosynthesis; L-arginine biosynthesis; N(2)-acetyl-L-ornithine from L-glutamate: step 2/4.</text>
</comment>
<comment type="subcellular location">
    <subcellularLocation>
        <location evidence="1">Cytoplasm</location>
    </subcellularLocation>
</comment>
<comment type="similarity">
    <text evidence="1">Belongs to the acetylglutamate kinase family. ArgB subfamily.</text>
</comment>
<keyword id="KW-0028">Amino-acid biosynthesis</keyword>
<keyword id="KW-0055">Arginine biosynthesis</keyword>
<keyword id="KW-0067">ATP-binding</keyword>
<keyword id="KW-0963">Cytoplasm</keyword>
<keyword id="KW-0418">Kinase</keyword>
<keyword id="KW-0547">Nucleotide-binding</keyword>
<keyword id="KW-1185">Reference proteome</keyword>
<keyword id="KW-0808">Transferase</keyword>
<reference key="1">
    <citation type="journal article" date="2006" name="Proc. Natl. Acad. Sci. U.S.A.">
        <title>Genome sequence of Synechococcus CC9311: insights into adaptation to a coastal environment.</title>
        <authorList>
            <person name="Palenik B."/>
            <person name="Ren Q."/>
            <person name="Dupont C.L."/>
            <person name="Myers G.S."/>
            <person name="Heidelberg J.F."/>
            <person name="Badger J.H."/>
            <person name="Madupu R."/>
            <person name="Nelson W.C."/>
            <person name="Brinkac L.M."/>
            <person name="Dodson R.J."/>
            <person name="Durkin A.S."/>
            <person name="Daugherty S.C."/>
            <person name="Sullivan S.A."/>
            <person name="Khouri H."/>
            <person name="Mohamoud Y."/>
            <person name="Halpin R."/>
            <person name="Paulsen I.T."/>
        </authorList>
    </citation>
    <scope>NUCLEOTIDE SEQUENCE [LARGE SCALE GENOMIC DNA]</scope>
    <source>
        <strain>CC9311</strain>
    </source>
</reference>
<protein>
    <recommendedName>
        <fullName evidence="1">Acetylglutamate kinase</fullName>
        <ecNumber evidence="1">2.7.2.8</ecNumber>
    </recommendedName>
    <alternativeName>
        <fullName evidence="1">N-acetyl-L-glutamate 5-phosphotransferase</fullName>
    </alternativeName>
    <alternativeName>
        <fullName evidence="1">NAG kinase</fullName>
        <shortName evidence="1">NAGK</shortName>
    </alternativeName>
</protein>
<proteinExistence type="inferred from homology"/>
<organism>
    <name type="scientific">Synechococcus sp. (strain CC9311)</name>
    <dbReference type="NCBI Taxonomy" id="64471"/>
    <lineage>
        <taxon>Bacteria</taxon>
        <taxon>Bacillati</taxon>
        <taxon>Cyanobacteriota</taxon>
        <taxon>Cyanophyceae</taxon>
        <taxon>Synechococcales</taxon>
        <taxon>Synechococcaceae</taxon>
        <taxon>Synechococcus</taxon>
    </lineage>
</organism>